<protein>
    <recommendedName>
        <fullName evidence="2">Importin subunit beta-2</fullName>
    </recommendedName>
    <alternativeName>
        <fullName evidence="1">Importin-104</fullName>
    </alternativeName>
    <alternativeName>
        <fullName evidence="1">Karyopherin subunit beta-2</fullName>
    </alternativeName>
    <alternativeName>
        <fullName evidence="1">Karyopherin-104</fullName>
    </alternativeName>
    <alternativeName>
        <fullName evidence="2">Transportin</fullName>
        <shortName evidence="2">TRN</shortName>
    </alternativeName>
</protein>
<comment type="function">
    <text evidence="1">Functions in nuclear protein import as nuclear transport receptor. Serves as receptor for arginine/glycine-rich nuclear localization signals (rg-NLS) and PY-NLS in cargo substrates. Its predominant cargo substrate seems to be mRNA-binding proteins. Mediates docking of the importin/substrate complex to the nuclear pore complex (NPC) through binding to repeat-containing nucleoporins. The complex is subsequently translocated through the pore by an energy requiring, Ran-dependent mechanism. At the nucleoplasmic side of the NPC, GTP-Ran binding leads to release of the cargo. The importin is re-exported from the nucleus to the cytoplasm where GTP hydrolysis releases Ran from importin. The directionality of nuclear import is thought to be conferred by an asymmetric distribution of the GTP- and GDP-bound forms of Ran between the cytoplasm and nucleus.</text>
</comment>
<comment type="subunit">
    <text evidence="1">Interacts with Ran; interacts specifically with the GTP-bound form of Ran (GTP-Ran), protecting it from GTP hydrolysis and nucleotide exchange. Interacts with nucleoporins.</text>
</comment>
<comment type="subcellular location">
    <subcellularLocation>
        <location evidence="5">Cytoplasm</location>
    </subcellularLocation>
    <subcellularLocation>
        <location evidence="4 5">Nucleus envelope</location>
    </subcellularLocation>
</comment>
<comment type="disruption phenotype">
    <text evidence="4">Severely impaired growth at 32 degrees Celsius.</text>
</comment>
<comment type="similarity">
    <text evidence="7">Belongs to the importin beta family. Importin beta-2 subfamily.</text>
</comment>
<dbReference type="EMBL" id="CU329670">
    <property type="protein sequence ID" value="CAB16272.1"/>
    <property type="molecule type" value="Genomic_DNA"/>
</dbReference>
<dbReference type="PIR" id="T38539">
    <property type="entry name" value="T38539"/>
</dbReference>
<dbReference type="RefSeq" id="NP_594385.1">
    <property type="nucleotide sequence ID" value="NM_001019806.2"/>
</dbReference>
<dbReference type="SMR" id="O14089"/>
<dbReference type="BioGRID" id="278527">
    <property type="interactions" value="2"/>
</dbReference>
<dbReference type="FunCoup" id="O14089">
    <property type="interactions" value="1128"/>
</dbReference>
<dbReference type="STRING" id="284812.O14089"/>
<dbReference type="iPTMnet" id="O14089"/>
<dbReference type="PaxDb" id="4896-SPAC2F3.06c.1"/>
<dbReference type="EnsemblFungi" id="SPAC2F3.06c.1">
    <property type="protein sequence ID" value="SPAC2F3.06c.1:pep"/>
    <property type="gene ID" value="SPAC2F3.06c"/>
</dbReference>
<dbReference type="GeneID" id="2542046"/>
<dbReference type="KEGG" id="spo:2542046"/>
<dbReference type="PomBase" id="SPAC2F3.06c">
    <property type="gene designation" value="kap104"/>
</dbReference>
<dbReference type="VEuPathDB" id="FungiDB:SPAC2F3.06c"/>
<dbReference type="eggNOG" id="KOG2023">
    <property type="taxonomic scope" value="Eukaryota"/>
</dbReference>
<dbReference type="HOGENOM" id="CLU_008136_1_0_1"/>
<dbReference type="InParanoid" id="O14089"/>
<dbReference type="OMA" id="AQEGAMS"/>
<dbReference type="PhylomeDB" id="O14089"/>
<dbReference type="Reactome" id="R-SPO-450513">
    <property type="pathway name" value="Tristetraprolin (TTP, ZFP36) binds and destabilizes mRNA"/>
</dbReference>
<dbReference type="PRO" id="PR:O14089"/>
<dbReference type="Proteomes" id="UP000002485">
    <property type="component" value="Chromosome I"/>
</dbReference>
<dbReference type="GO" id="GO:0005737">
    <property type="term" value="C:cytoplasm"/>
    <property type="evidence" value="ECO:0000318"/>
    <property type="project" value="GO_Central"/>
</dbReference>
<dbReference type="GO" id="GO:0005829">
    <property type="term" value="C:cytosol"/>
    <property type="evidence" value="ECO:0007005"/>
    <property type="project" value="PomBase"/>
</dbReference>
<dbReference type="GO" id="GO:1990023">
    <property type="term" value="C:mitotic spindle midzone"/>
    <property type="evidence" value="ECO:0000314"/>
    <property type="project" value="PomBase"/>
</dbReference>
<dbReference type="GO" id="GO:0005635">
    <property type="term" value="C:nuclear envelope"/>
    <property type="evidence" value="ECO:0007005"/>
    <property type="project" value="PomBase"/>
</dbReference>
<dbReference type="GO" id="GO:0034399">
    <property type="term" value="C:nuclear periphery"/>
    <property type="evidence" value="ECO:0000314"/>
    <property type="project" value="PomBase"/>
</dbReference>
<dbReference type="GO" id="GO:0005634">
    <property type="term" value="C:nucleus"/>
    <property type="evidence" value="ECO:0007005"/>
    <property type="project" value="PomBase"/>
</dbReference>
<dbReference type="GO" id="GO:0005525">
    <property type="term" value="F:GTP binding"/>
    <property type="evidence" value="ECO:0000303"/>
    <property type="project" value="PomBase"/>
</dbReference>
<dbReference type="GO" id="GO:0061608">
    <property type="term" value="F:nuclear import signal receptor activity"/>
    <property type="evidence" value="ECO:0000318"/>
    <property type="project" value="GO_Central"/>
</dbReference>
<dbReference type="GO" id="GO:0008139">
    <property type="term" value="F:nuclear localization sequence binding"/>
    <property type="evidence" value="ECO:0000318"/>
    <property type="project" value="GO_Central"/>
</dbReference>
<dbReference type="GO" id="GO:0051028">
    <property type="term" value="P:mRNA transport"/>
    <property type="evidence" value="ECO:0007669"/>
    <property type="project" value="UniProtKB-KW"/>
</dbReference>
<dbReference type="GO" id="GO:0006606">
    <property type="term" value="P:protein import into nucleus"/>
    <property type="evidence" value="ECO:0000318"/>
    <property type="project" value="GO_Central"/>
</dbReference>
<dbReference type="FunFam" id="1.25.10.10:FF:000028">
    <property type="entry name" value="Transportin-1 isoform 1"/>
    <property type="match status" value="1"/>
</dbReference>
<dbReference type="Gene3D" id="1.25.10.10">
    <property type="entry name" value="Leucine-rich Repeat Variant"/>
    <property type="match status" value="2"/>
</dbReference>
<dbReference type="InterPro" id="IPR011989">
    <property type="entry name" value="ARM-like"/>
</dbReference>
<dbReference type="InterPro" id="IPR016024">
    <property type="entry name" value="ARM-type_fold"/>
</dbReference>
<dbReference type="InterPro" id="IPR040122">
    <property type="entry name" value="Importin_beta"/>
</dbReference>
<dbReference type="PANTHER" id="PTHR10527">
    <property type="entry name" value="IMPORTIN BETA"/>
    <property type="match status" value="1"/>
</dbReference>
<dbReference type="Pfam" id="PF13513">
    <property type="entry name" value="HEAT_EZ"/>
    <property type="match status" value="1"/>
</dbReference>
<dbReference type="SUPFAM" id="SSF48371">
    <property type="entry name" value="ARM repeat"/>
    <property type="match status" value="1"/>
</dbReference>
<name>IMB2_SCHPO</name>
<organism>
    <name type="scientific">Schizosaccharomyces pombe (strain 972 / ATCC 24843)</name>
    <name type="common">Fission yeast</name>
    <dbReference type="NCBI Taxonomy" id="284812"/>
    <lineage>
        <taxon>Eukaryota</taxon>
        <taxon>Fungi</taxon>
        <taxon>Dikarya</taxon>
        <taxon>Ascomycota</taxon>
        <taxon>Taphrinomycotina</taxon>
        <taxon>Schizosaccharomycetes</taxon>
        <taxon>Schizosaccharomycetales</taxon>
        <taxon>Schizosaccharomycetaceae</taxon>
        <taxon>Schizosaccharomyces</taxon>
    </lineage>
</organism>
<reference key="1">
    <citation type="journal article" date="2002" name="Nature">
        <title>The genome sequence of Schizosaccharomyces pombe.</title>
        <authorList>
            <person name="Wood V."/>
            <person name="Gwilliam R."/>
            <person name="Rajandream M.A."/>
            <person name="Lyne M.H."/>
            <person name="Lyne R."/>
            <person name="Stewart A."/>
            <person name="Sgouros J.G."/>
            <person name="Peat N."/>
            <person name="Hayles J."/>
            <person name="Baker S.G."/>
            <person name="Basham D."/>
            <person name="Bowman S."/>
            <person name="Brooks K."/>
            <person name="Brown D."/>
            <person name="Brown S."/>
            <person name="Chillingworth T."/>
            <person name="Churcher C.M."/>
            <person name="Collins M."/>
            <person name="Connor R."/>
            <person name="Cronin A."/>
            <person name="Davis P."/>
            <person name="Feltwell T."/>
            <person name="Fraser A."/>
            <person name="Gentles S."/>
            <person name="Goble A."/>
            <person name="Hamlin N."/>
            <person name="Harris D.E."/>
            <person name="Hidalgo J."/>
            <person name="Hodgson G."/>
            <person name="Holroyd S."/>
            <person name="Hornsby T."/>
            <person name="Howarth S."/>
            <person name="Huckle E.J."/>
            <person name="Hunt S."/>
            <person name="Jagels K."/>
            <person name="James K.D."/>
            <person name="Jones L."/>
            <person name="Jones M."/>
            <person name="Leather S."/>
            <person name="McDonald S."/>
            <person name="McLean J."/>
            <person name="Mooney P."/>
            <person name="Moule S."/>
            <person name="Mungall K.L."/>
            <person name="Murphy L.D."/>
            <person name="Niblett D."/>
            <person name="Odell C."/>
            <person name="Oliver K."/>
            <person name="O'Neil S."/>
            <person name="Pearson D."/>
            <person name="Quail M.A."/>
            <person name="Rabbinowitsch E."/>
            <person name="Rutherford K.M."/>
            <person name="Rutter S."/>
            <person name="Saunders D."/>
            <person name="Seeger K."/>
            <person name="Sharp S."/>
            <person name="Skelton J."/>
            <person name="Simmonds M.N."/>
            <person name="Squares R."/>
            <person name="Squares S."/>
            <person name="Stevens K."/>
            <person name="Taylor K."/>
            <person name="Taylor R.G."/>
            <person name="Tivey A."/>
            <person name="Walsh S.V."/>
            <person name="Warren T."/>
            <person name="Whitehead S."/>
            <person name="Woodward J.R."/>
            <person name="Volckaert G."/>
            <person name="Aert R."/>
            <person name="Robben J."/>
            <person name="Grymonprez B."/>
            <person name="Weltjens I."/>
            <person name="Vanstreels E."/>
            <person name="Rieger M."/>
            <person name="Schaefer M."/>
            <person name="Mueller-Auer S."/>
            <person name="Gabel C."/>
            <person name="Fuchs M."/>
            <person name="Duesterhoeft A."/>
            <person name="Fritzc C."/>
            <person name="Holzer E."/>
            <person name="Moestl D."/>
            <person name="Hilbert H."/>
            <person name="Borzym K."/>
            <person name="Langer I."/>
            <person name="Beck A."/>
            <person name="Lehrach H."/>
            <person name="Reinhardt R."/>
            <person name="Pohl T.M."/>
            <person name="Eger P."/>
            <person name="Zimmermann W."/>
            <person name="Wedler H."/>
            <person name="Wambutt R."/>
            <person name="Purnelle B."/>
            <person name="Goffeau A."/>
            <person name="Cadieu E."/>
            <person name="Dreano S."/>
            <person name="Gloux S."/>
            <person name="Lelaure V."/>
            <person name="Mottier S."/>
            <person name="Galibert F."/>
            <person name="Aves S.J."/>
            <person name="Xiang Z."/>
            <person name="Hunt C."/>
            <person name="Moore K."/>
            <person name="Hurst S.M."/>
            <person name="Lucas M."/>
            <person name="Rochet M."/>
            <person name="Gaillardin C."/>
            <person name="Tallada V.A."/>
            <person name="Garzon A."/>
            <person name="Thode G."/>
            <person name="Daga R.R."/>
            <person name="Cruzado L."/>
            <person name="Jimenez J."/>
            <person name="Sanchez M."/>
            <person name="del Rey F."/>
            <person name="Benito J."/>
            <person name="Dominguez A."/>
            <person name="Revuelta J.L."/>
            <person name="Moreno S."/>
            <person name="Armstrong J."/>
            <person name="Forsburg S.L."/>
            <person name="Cerutti L."/>
            <person name="Lowe T."/>
            <person name="McCombie W.R."/>
            <person name="Paulsen I."/>
            <person name="Potashkin J."/>
            <person name="Shpakovski G.V."/>
            <person name="Ussery D."/>
            <person name="Barrell B.G."/>
            <person name="Nurse P."/>
        </authorList>
    </citation>
    <scope>NUCLEOTIDE SEQUENCE [LARGE SCALE GENOMIC DNA]</scope>
    <source>
        <strain>972 / ATCC 24843</strain>
    </source>
</reference>
<reference key="2">
    <citation type="journal article" date="2004" name="Yeast">
        <title>Identification of genes encoding putative nucleoporins and transport factors in the fission yeast Schizosaccharomyces pombe: a deletion analysis.</title>
        <authorList>
            <person name="Chen X.Q."/>
            <person name="Du X."/>
            <person name="Liu J."/>
            <person name="Balasubramanian M.K."/>
            <person name="Balasundaram D."/>
        </authorList>
    </citation>
    <scope>SUBCELLULAR LOCATION</scope>
    <scope>DISRUPTION PHENOTYPE</scope>
</reference>
<reference key="3">
    <citation type="journal article" date="2006" name="Nat. Biotechnol.">
        <title>ORFeome cloning and global analysis of protein localization in the fission yeast Schizosaccharomyces pombe.</title>
        <authorList>
            <person name="Matsuyama A."/>
            <person name="Arai R."/>
            <person name="Yashiroda Y."/>
            <person name="Shirai A."/>
            <person name="Kamata A."/>
            <person name="Sekido S."/>
            <person name="Kobayashi Y."/>
            <person name="Hashimoto A."/>
            <person name="Hamamoto M."/>
            <person name="Hiraoka Y."/>
            <person name="Horinouchi S."/>
            <person name="Yoshida M."/>
        </authorList>
    </citation>
    <scope>SUBCELLULAR LOCATION [LARGE SCALE ANALYSIS]</scope>
</reference>
<sequence>MGDNPWVLQEQVLVELSEVIKNSLSENSQTRNAALNLLEKAKDIPDLNNYLTCILINATELSVSIRSAAGLLLKNNVRVSSLESGSGLQSLDYTKSTVIRGLCDPEQLIRGISGNVITTIISRWGISTWPEVLPQLMEMLSSPASTTQEGAFSALTKICEDSAQELDRDFNGTRPLDFMIPRFIELARHENPKIRTDALFCLNQFVLIQSQSLYAHIDTFLETCYALATDVSPNVRKNVCQALVYLLDVRPDKIAPSLGSIVEYMLYSTQDSDQNVALEACEFWLAIAEQPDLCSALGPYLDKIVPMLLQGMVYSDMDLLLLGNDADDYDVEDREEDIRPQHAKGKSRITLNTQGPITQQGSSNADADELEDEDEDDDEFDEDDDAFMDWNLRKCSAAALDVLSSFWKQRLLEIILPHLKQSLTSEDWKVQEAGVLAVGAIAEGCMDGMVQYLPELYPYFLSLLDSKKPLVRTITCWTLGRYSKWASCLESEEDRQKYFVPLLQGLLRMVVDNNKKVQEAGCSAFAILEEQAGPSLVPYLEPILTNLAFAFQKYQRKNVLILYDAVQTLADYVGSALNDKRYIELLITPLLQKWSMIPDDDPNLFPLFECLSSVAVALRDGFAPFAAETYARTFRILRNTLYLITTAQNDPTVDVPDRDFLVTTLDLVSGIIQALGSQVSPLLAQADPPLGQIIGICAKDEVPEVRQSAYALLGDMCMYCFDQIRPYCDALLVDMLPQMQLPLLHVSASNNAIWSAGEMALQLGKDMQQWVKPLLERLICILKSKKSNTTVLENVAITIGRLGVYNPELVAPHLELFYQPWFEIIKTVGENEEKDSAFRGFCNILACNPQALSYLLPMFVLCVAEYENPSAELRDMFQKILQGSVELFNGKASWQASPEVLAQIQAQYGV</sequence>
<keyword id="KW-0963">Cytoplasm</keyword>
<keyword id="KW-0509">mRNA transport</keyword>
<keyword id="KW-0539">Nucleus</keyword>
<keyword id="KW-0653">Protein transport</keyword>
<keyword id="KW-1185">Reference proteome</keyword>
<keyword id="KW-0677">Repeat</keyword>
<keyword id="KW-0813">Transport</keyword>
<gene>
    <name evidence="6" type="primary">kap104</name>
    <name evidence="8" type="ORF">SPAC2F3.06c</name>
</gene>
<evidence type="ECO:0000250" key="1">
    <source>
        <dbReference type="UniProtKB" id="P38217"/>
    </source>
</evidence>
<evidence type="ECO:0000250" key="2">
    <source>
        <dbReference type="UniProtKB" id="Q92973"/>
    </source>
</evidence>
<evidence type="ECO:0000256" key="3">
    <source>
        <dbReference type="SAM" id="MobiDB-lite"/>
    </source>
</evidence>
<evidence type="ECO:0000269" key="4">
    <source>
    </source>
</evidence>
<evidence type="ECO:0000269" key="5">
    <source>
    </source>
</evidence>
<evidence type="ECO:0000303" key="6">
    <source>
    </source>
</evidence>
<evidence type="ECO:0000305" key="7"/>
<evidence type="ECO:0000312" key="8">
    <source>
        <dbReference type="PomBase" id="SPAC2F3.06c"/>
    </source>
</evidence>
<feature type="chain" id="PRO_0000120769" description="Importin subunit beta-2">
    <location>
        <begin position="1"/>
        <end position="910"/>
    </location>
</feature>
<feature type="repeat" description="HEAT 1" evidence="2">
    <location>
        <begin position="12"/>
        <end position="39"/>
    </location>
</feature>
<feature type="domain" description="Importin N-terminal" evidence="7">
    <location>
        <begin position="34"/>
        <end position="122"/>
    </location>
</feature>
<feature type="repeat" description="HEAT 2" evidence="2">
    <location>
        <begin position="44"/>
        <end position="82"/>
    </location>
</feature>
<feature type="repeat" description="HEAT 3" evidence="2">
    <location>
        <begin position="93"/>
        <end position="126"/>
    </location>
</feature>
<feature type="repeat" description="HEAT 4" evidence="2">
    <location>
        <begin position="132"/>
        <end position="169"/>
    </location>
</feature>
<feature type="repeat" description="HEAT 5" evidence="2">
    <location>
        <begin position="177"/>
        <end position="207"/>
    </location>
</feature>
<feature type="repeat" description="HEAT 6" evidence="2">
    <location>
        <begin position="220"/>
        <end position="247"/>
    </location>
</feature>
<feature type="repeat" description="HEAT 7" evidence="2">
    <location>
        <begin position="259"/>
        <end position="286"/>
    </location>
</feature>
<feature type="repeat" description="HEAT 8" evidence="2">
    <location>
        <begin position="302"/>
        <end position="406"/>
    </location>
</feature>
<feature type="repeat" description="HEAT 9" evidence="2">
    <location>
        <begin position="414"/>
        <end position="442"/>
    </location>
</feature>
<feature type="repeat" description="HEAT 10" evidence="2">
    <location>
        <begin position="454"/>
        <end position="481"/>
    </location>
</feature>
<feature type="repeat" description="HEAT 11" evidence="2">
    <location>
        <begin position="499"/>
        <end position="532"/>
    </location>
</feature>
<feature type="repeat" description="HEAT 12" evidence="2">
    <location>
        <begin position="540"/>
        <end position="573"/>
    </location>
</feature>
<feature type="repeat" description="HEAT 13" evidence="2">
    <location>
        <begin position="581"/>
        <end position="619"/>
    </location>
</feature>
<feature type="repeat" description="HEAT 14" evidence="2">
    <location>
        <begin position="627"/>
        <end position="677"/>
    </location>
</feature>
<feature type="repeat" description="HEAT 15" evidence="2">
    <location>
        <begin position="690"/>
        <end position="721"/>
    </location>
</feature>
<feature type="repeat" description="HEAT 16" evidence="2">
    <location>
        <begin position="729"/>
        <end position="764"/>
    </location>
</feature>
<feature type="repeat" description="HEAT 17" evidence="2">
    <location>
        <begin position="772"/>
        <end position="807"/>
    </location>
</feature>
<feature type="repeat" description="HEAT 18" evidence="2">
    <location>
        <begin position="815"/>
        <end position="848"/>
    </location>
</feature>
<feature type="repeat" description="HEAT 19" evidence="2">
    <location>
        <begin position="857"/>
        <end position="888"/>
    </location>
</feature>
<feature type="region of interest" description="Disordered" evidence="3">
    <location>
        <begin position="333"/>
        <end position="381"/>
    </location>
</feature>
<feature type="compositionally biased region" description="Polar residues" evidence="3">
    <location>
        <begin position="349"/>
        <end position="364"/>
    </location>
</feature>
<feature type="compositionally biased region" description="Acidic residues" evidence="3">
    <location>
        <begin position="366"/>
        <end position="381"/>
    </location>
</feature>
<accession>O14089</accession>
<proteinExistence type="inferred from homology"/>